<organism>
    <name type="scientific">Pasteurella multocida (strain Pm70)</name>
    <dbReference type="NCBI Taxonomy" id="272843"/>
    <lineage>
        <taxon>Bacteria</taxon>
        <taxon>Pseudomonadati</taxon>
        <taxon>Pseudomonadota</taxon>
        <taxon>Gammaproteobacteria</taxon>
        <taxon>Pasteurellales</taxon>
        <taxon>Pasteurellaceae</taxon>
        <taxon>Pasteurella</taxon>
    </lineage>
</organism>
<accession>Q9CN24</accession>
<comment type="function">
    <text evidence="1">Converts molybdopterin precursor Z into molybdopterin. This requires the incorporation of two sulfur atoms into precursor Z to generate a dithiolene group. The sulfur is provided by MoaD (By similarity).</text>
</comment>
<comment type="catalytic activity">
    <reaction>
        <text>2 [molybdopterin-synthase sulfur-carrier protein]-C-terminal-Gly-aminoethanethioate + cyclic pyranopterin phosphate + H2O = molybdopterin + 2 [molybdopterin-synthase sulfur-carrier protein]-C-terminal Gly-Gly + 2 H(+)</text>
        <dbReference type="Rhea" id="RHEA:26333"/>
        <dbReference type="Rhea" id="RHEA-COMP:12202"/>
        <dbReference type="Rhea" id="RHEA-COMP:19907"/>
        <dbReference type="ChEBI" id="CHEBI:15377"/>
        <dbReference type="ChEBI" id="CHEBI:15378"/>
        <dbReference type="ChEBI" id="CHEBI:58698"/>
        <dbReference type="ChEBI" id="CHEBI:59648"/>
        <dbReference type="ChEBI" id="CHEBI:90778"/>
        <dbReference type="ChEBI" id="CHEBI:232372"/>
        <dbReference type="EC" id="2.8.1.12"/>
    </reaction>
</comment>
<comment type="pathway">
    <text>Cofactor biosynthesis; molybdopterin biosynthesis.</text>
</comment>
<comment type="subunit">
    <text evidence="1">Heterotetramer of 2 MoaD subunits and 2 MoaE subunits. Also stable as homodimer. The enzyme changes between these two forms during catalysis (By similarity).</text>
</comment>
<comment type="similarity">
    <text evidence="2">Belongs to the MoaE family.</text>
</comment>
<gene>
    <name type="primary">moaE</name>
    <name type="ordered locus">PM0622</name>
</gene>
<protein>
    <recommendedName>
        <fullName>Molybdopterin synthase catalytic subunit</fullName>
        <ecNumber>2.8.1.12</ecNumber>
    </recommendedName>
    <alternativeName>
        <fullName>MPT synthase subunit 2</fullName>
    </alternativeName>
    <alternativeName>
        <fullName>Molybdenum cofactor biosynthesis protein E</fullName>
    </alternativeName>
    <alternativeName>
        <fullName>Molybdopterin-converting factor large subunit</fullName>
    </alternativeName>
    <alternativeName>
        <fullName>Molybdopterin-converting factor subunit 2</fullName>
    </alternativeName>
</protein>
<keyword id="KW-0501">Molybdenum cofactor biosynthesis</keyword>
<keyword id="KW-1185">Reference proteome</keyword>
<keyword id="KW-0808">Transferase</keyword>
<feature type="chain" id="PRO_0000163089" description="Molybdopterin synthase catalytic subunit">
    <location>
        <begin position="1"/>
        <end position="150"/>
    </location>
</feature>
<feature type="binding site" evidence="1">
    <location>
        <begin position="37"/>
        <end position="39"/>
    </location>
    <ligand>
        <name>substrate</name>
    </ligand>
</feature>
<feature type="binding site" evidence="1">
    <location>
        <begin position="103"/>
        <end position="104"/>
    </location>
    <ligand>
        <name>substrate</name>
    </ligand>
</feature>
<feature type="binding site" evidence="1">
    <location>
        <position position="119"/>
    </location>
    <ligand>
        <name>substrate</name>
    </ligand>
</feature>
<feature type="binding site" evidence="1">
    <location>
        <begin position="126"/>
        <end position="128"/>
    </location>
    <ligand>
        <name>substrate</name>
    </ligand>
</feature>
<proteinExistence type="inferred from homology"/>
<name>MOAE_PASMU</name>
<dbReference type="EC" id="2.8.1.12"/>
<dbReference type="EMBL" id="AE004439">
    <property type="protein sequence ID" value="AAK02706.1"/>
    <property type="molecule type" value="Genomic_DNA"/>
</dbReference>
<dbReference type="RefSeq" id="WP_005751475.1">
    <property type="nucleotide sequence ID" value="NC_002663.1"/>
</dbReference>
<dbReference type="SMR" id="Q9CN24"/>
<dbReference type="STRING" id="272843.PM0622"/>
<dbReference type="EnsemblBacteria" id="AAK02706">
    <property type="protein sequence ID" value="AAK02706"/>
    <property type="gene ID" value="PM0622"/>
</dbReference>
<dbReference type="GeneID" id="77208029"/>
<dbReference type="KEGG" id="pmu:PM0622"/>
<dbReference type="PATRIC" id="fig|272843.6.peg.630"/>
<dbReference type="HOGENOM" id="CLU_089568_2_1_6"/>
<dbReference type="OrthoDB" id="9803224at2"/>
<dbReference type="UniPathway" id="UPA00344"/>
<dbReference type="Proteomes" id="UP000000809">
    <property type="component" value="Chromosome"/>
</dbReference>
<dbReference type="GO" id="GO:0030366">
    <property type="term" value="F:molybdopterin synthase activity"/>
    <property type="evidence" value="ECO:0007669"/>
    <property type="project" value="UniProtKB-EC"/>
</dbReference>
<dbReference type="GO" id="GO:0006777">
    <property type="term" value="P:Mo-molybdopterin cofactor biosynthetic process"/>
    <property type="evidence" value="ECO:0007669"/>
    <property type="project" value="UniProtKB-KW"/>
</dbReference>
<dbReference type="CDD" id="cd00756">
    <property type="entry name" value="MoaE"/>
    <property type="match status" value="1"/>
</dbReference>
<dbReference type="FunFam" id="3.90.1170.40:FF:000001">
    <property type="entry name" value="Molybdopterin synthase catalytic subunit MoaE"/>
    <property type="match status" value="1"/>
</dbReference>
<dbReference type="Gene3D" id="3.90.1170.40">
    <property type="entry name" value="Molybdopterin biosynthesis MoaE subunit"/>
    <property type="match status" value="1"/>
</dbReference>
<dbReference type="InterPro" id="IPR036563">
    <property type="entry name" value="MoaE_sf"/>
</dbReference>
<dbReference type="InterPro" id="IPR003448">
    <property type="entry name" value="Mopterin_biosynth_MoaE"/>
</dbReference>
<dbReference type="NCBIfam" id="NF007959">
    <property type="entry name" value="PRK10678.1"/>
    <property type="match status" value="1"/>
</dbReference>
<dbReference type="PANTHER" id="PTHR23404">
    <property type="entry name" value="MOLYBDOPTERIN SYNTHASE RELATED"/>
    <property type="match status" value="1"/>
</dbReference>
<dbReference type="Pfam" id="PF02391">
    <property type="entry name" value="MoaE"/>
    <property type="match status" value="1"/>
</dbReference>
<dbReference type="SUPFAM" id="SSF54690">
    <property type="entry name" value="Molybdopterin synthase subunit MoaE"/>
    <property type="match status" value="1"/>
</dbReference>
<reference key="1">
    <citation type="journal article" date="2001" name="Proc. Natl. Acad. Sci. U.S.A.">
        <title>Complete genomic sequence of Pasteurella multocida Pm70.</title>
        <authorList>
            <person name="May B.J."/>
            <person name="Zhang Q."/>
            <person name="Li L.L."/>
            <person name="Paustian M.L."/>
            <person name="Whittam T.S."/>
            <person name="Kapur V."/>
        </authorList>
    </citation>
    <scope>NUCLEOTIDE SEQUENCE [LARGE SCALE GENOMIC DNA]</scope>
    <source>
        <strain>Pm70</strain>
    </source>
</reference>
<sequence>MSDIQIAVQEQPFDQNAAYRWLSEQHSVGATVVFVGKVRDLNLGDEVSSLYLEHYPAMTEKALTEIVAQAKARWDIQRVCVIHRVGLLQTGDEIVFVGVSSAHRGEAYQANEFIMDFLKSKAPFWKKEKTTQGERWIESRDTDQQALARW</sequence>
<evidence type="ECO:0000250" key="1"/>
<evidence type="ECO:0000305" key="2"/>